<comment type="function">
    <text evidence="1">Component of the class I major histocompatibility complex (MHC). Involved in the presentation of peptide antigens to the immune system (By similarity).</text>
</comment>
<comment type="subunit">
    <text evidence="1">Heterodimer of an alpha chain and a beta chain. Beta-2-microglobulin is the beta-chain of major histocompatibility complex class I molecules (By similarity).</text>
</comment>
<comment type="subcellular location">
    <subcellularLocation>
        <location evidence="1">Secreted</location>
    </subcellularLocation>
</comment>
<comment type="similarity">
    <text evidence="3">Belongs to the beta-2-microglobulin family.</text>
</comment>
<reference key="1">
    <citation type="journal article" date="1998" name="Immunogenetics">
        <title>Beta-2-microglobulin in neotropical primates (Platyrrhini).</title>
        <authorList>
            <person name="Canavez F.C."/>
            <person name="Ladasky J.J."/>
            <person name="Muniz J.A.P.C."/>
            <person name="Seuanez H.N."/>
            <person name="Parham P."/>
        </authorList>
    </citation>
    <scope>NUCLEOTIDE SEQUENCE [GENOMIC DNA]</scope>
    <source>
        <tissue>Blood</tissue>
    </source>
</reference>
<keyword id="KW-1015">Disulfide bond</keyword>
<keyword id="KW-0391">Immunity</keyword>
<keyword id="KW-0393">Immunoglobulin domain</keyword>
<keyword id="KW-0490">MHC I</keyword>
<keyword id="KW-0964">Secreted</keyword>
<keyword id="KW-0732">Signal</keyword>
<protein>
    <recommendedName>
        <fullName>Beta-2-microglobulin</fullName>
    </recommendedName>
</protein>
<name>B2MG_ATEPA</name>
<proteinExistence type="inferred from homology"/>
<feature type="signal peptide" evidence="1">
    <location>
        <begin position="1"/>
        <end position="20"/>
    </location>
</feature>
<feature type="chain" id="PRO_0000018755" description="Beta-2-microglobulin">
    <location>
        <begin position="21"/>
        <end position="119"/>
    </location>
</feature>
<feature type="domain" description="Ig-like C1-type">
    <location>
        <begin position="25"/>
        <end position="114"/>
    </location>
</feature>
<feature type="disulfide bond" evidence="2">
    <location>
        <begin position="45"/>
        <end position="100"/>
    </location>
</feature>
<evidence type="ECO:0000250" key="1"/>
<evidence type="ECO:0000255" key="2">
    <source>
        <dbReference type="PROSITE-ProRule" id="PRU00114"/>
    </source>
</evidence>
<evidence type="ECO:0000305" key="3"/>
<sequence length="119" mass="13654">MARSVVVALLVLLSLSGLEAIQHAPKIQVYSRHPAENGKPNFLNCYVSGFHPSDIEVDLLKNGKKIEKVEHSDLSFSKDWSFYLLYYTEFTPNEKDEYACRVSHVTFSTPKTVKWDRTM</sequence>
<gene>
    <name type="primary">B2M</name>
</gene>
<dbReference type="EMBL" id="AF032087">
    <property type="protein sequence ID" value="AAC52101.1"/>
    <property type="molecule type" value="Genomic_DNA"/>
</dbReference>
<dbReference type="EMBL" id="AF032086">
    <property type="protein sequence ID" value="AAC52101.1"/>
    <property type="status" value="JOINED"/>
    <property type="molecule type" value="Genomic_DNA"/>
</dbReference>
<dbReference type="SMR" id="O77536"/>
<dbReference type="GO" id="GO:0005576">
    <property type="term" value="C:extracellular region"/>
    <property type="evidence" value="ECO:0007669"/>
    <property type="project" value="UniProtKB-SubCell"/>
</dbReference>
<dbReference type="GO" id="GO:0042612">
    <property type="term" value="C:MHC class I protein complex"/>
    <property type="evidence" value="ECO:0007669"/>
    <property type="project" value="UniProtKB-KW"/>
</dbReference>
<dbReference type="GO" id="GO:0002474">
    <property type="term" value="P:antigen processing and presentation of peptide antigen via MHC class I"/>
    <property type="evidence" value="ECO:0007669"/>
    <property type="project" value="UniProtKB-KW"/>
</dbReference>
<dbReference type="GO" id="GO:0006955">
    <property type="term" value="P:immune response"/>
    <property type="evidence" value="ECO:0007669"/>
    <property type="project" value="InterPro"/>
</dbReference>
<dbReference type="CDD" id="cd05770">
    <property type="entry name" value="IgC1_beta2m"/>
    <property type="match status" value="1"/>
</dbReference>
<dbReference type="FunFam" id="2.60.40.10:FF:001005">
    <property type="entry name" value="Beta-2-microglobulin"/>
    <property type="match status" value="1"/>
</dbReference>
<dbReference type="Gene3D" id="2.60.40.10">
    <property type="entry name" value="Immunoglobulins"/>
    <property type="match status" value="1"/>
</dbReference>
<dbReference type="InterPro" id="IPR015707">
    <property type="entry name" value="B2Microglobulin"/>
</dbReference>
<dbReference type="InterPro" id="IPR007110">
    <property type="entry name" value="Ig-like_dom"/>
</dbReference>
<dbReference type="InterPro" id="IPR036179">
    <property type="entry name" value="Ig-like_dom_sf"/>
</dbReference>
<dbReference type="InterPro" id="IPR013783">
    <property type="entry name" value="Ig-like_fold"/>
</dbReference>
<dbReference type="InterPro" id="IPR003006">
    <property type="entry name" value="Ig/MHC_CS"/>
</dbReference>
<dbReference type="InterPro" id="IPR003597">
    <property type="entry name" value="Ig_C1-set"/>
</dbReference>
<dbReference type="InterPro" id="IPR050160">
    <property type="entry name" value="MHC/Immunoglobulin"/>
</dbReference>
<dbReference type="PANTHER" id="PTHR19944:SF62">
    <property type="entry name" value="BETA-2-MICROGLOBULIN"/>
    <property type="match status" value="1"/>
</dbReference>
<dbReference type="PANTHER" id="PTHR19944">
    <property type="entry name" value="MHC CLASS II-RELATED"/>
    <property type="match status" value="1"/>
</dbReference>
<dbReference type="Pfam" id="PF07654">
    <property type="entry name" value="C1-set"/>
    <property type="match status" value="1"/>
</dbReference>
<dbReference type="SMART" id="SM00407">
    <property type="entry name" value="IGc1"/>
    <property type="match status" value="1"/>
</dbReference>
<dbReference type="SUPFAM" id="SSF48726">
    <property type="entry name" value="Immunoglobulin"/>
    <property type="match status" value="1"/>
</dbReference>
<dbReference type="PROSITE" id="PS50835">
    <property type="entry name" value="IG_LIKE"/>
    <property type="match status" value="1"/>
</dbReference>
<dbReference type="PROSITE" id="PS00290">
    <property type="entry name" value="IG_MHC"/>
    <property type="match status" value="1"/>
</dbReference>
<accession>O77536</accession>
<organism>
    <name type="scientific">Ateles paniscus</name>
    <name type="common">Black spider monkey</name>
    <name type="synonym">Red-faced black spider monkey</name>
    <dbReference type="NCBI Taxonomy" id="9510"/>
    <lineage>
        <taxon>Eukaryota</taxon>
        <taxon>Metazoa</taxon>
        <taxon>Chordata</taxon>
        <taxon>Craniata</taxon>
        <taxon>Vertebrata</taxon>
        <taxon>Euteleostomi</taxon>
        <taxon>Mammalia</taxon>
        <taxon>Eutheria</taxon>
        <taxon>Euarchontoglires</taxon>
        <taxon>Primates</taxon>
        <taxon>Haplorrhini</taxon>
        <taxon>Platyrrhini</taxon>
        <taxon>Atelidae</taxon>
        <taxon>Atelinae</taxon>
        <taxon>Ateles</taxon>
    </lineage>
</organism>